<accession>Q211T8</accession>
<evidence type="ECO:0000255" key="1">
    <source>
        <dbReference type="HAMAP-Rule" id="MF_00033"/>
    </source>
</evidence>
<feature type="chain" id="PRO_0000315153" description="UDP-N-acetylglucosamine--N-acetylmuramyl-(pentapeptide) pyrophosphoryl-undecaprenol N-acetylglucosamine transferase">
    <location>
        <begin position="1"/>
        <end position="375"/>
    </location>
</feature>
<feature type="binding site" evidence="1">
    <location>
        <begin position="15"/>
        <end position="17"/>
    </location>
    <ligand>
        <name>UDP-N-acetyl-alpha-D-glucosamine</name>
        <dbReference type="ChEBI" id="CHEBI:57705"/>
    </ligand>
</feature>
<feature type="binding site" evidence="1">
    <location>
        <position position="126"/>
    </location>
    <ligand>
        <name>UDP-N-acetyl-alpha-D-glucosamine</name>
        <dbReference type="ChEBI" id="CHEBI:57705"/>
    </ligand>
</feature>
<feature type="binding site" evidence="1">
    <location>
        <position position="169"/>
    </location>
    <ligand>
        <name>UDP-N-acetyl-alpha-D-glucosamine</name>
        <dbReference type="ChEBI" id="CHEBI:57705"/>
    </ligand>
</feature>
<feature type="binding site" evidence="1">
    <location>
        <position position="197"/>
    </location>
    <ligand>
        <name>UDP-N-acetyl-alpha-D-glucosamine</name>
        <dbReference type="ChEBI" id="CHEBI:57705"/>
    </ligand>
</feature>
<feature type="binding site" evidence="1">
    <location>
        <position position="298"/>
    </location>
    <ligand>
        <name>UDP-N-acetyl-alpha-D-glucosamine</name>
        <dbReference type="ChEBI" id="CHEBI:57705"/>
    </ligand>
</feature>
<dbReference type="EC" id="2.4.1.227" evidence="1"/>
<dbReference type="EMBL" id="CP000301">
    <property type="protein sequence ID" value="ABD88848.1"/>
    <property type="molecule type" value="Genomic_DNA"/>
</dbReference>
<dbReference type="SMR" id="Q211T8"/>
<dbReference type="STRING" id="316056.RPC_3306"/>
<dbReference type="CAZy" id="GT28">
    <property type="family name" value="Glycosyltransferase Family 28"/>
</dbReference>
<dbReference type="KEGG" id="rpc:RPC_3306"/>
<dbReference type="eggNOG" id="COG0707">
    <property type="taxonomic scope" value="Bacteria"/>
</dbReference>
<dbReference type="HOGENOM" id="CLU_037404_2_1_5"/>
<dbReference type="OrthoDB" id="9808936at2"/>
<dbReference type="UniPathway" id="UPA00219"/>
<dbReference type="GO" id="GO:0005886">
    <property type="term" value="C:plasma membrane"/>
    <property type="evidence" value="ECO:0007669"/>
    <property type="project" value="UniProtKB-SubCell"/>
</dbReference>
<dbReference type="GO" id="GO:0051991">
    <property type="term" value="F:UDP-N-acetyl-D-glucosamine:N-acetylmuramoyl-L-alanyl-D-glutamyl-meso-2,6-diaminopimelyl-D-alanyl-D-alanine-diphosphoundecaprenol 4-beta-N-acetylglucosaminlytransferase activity"/>
    <property type="evidence" value="ECO:0007669"/>
    <property type="project" value="RHEA"/>
</dbReference>
<dbReference type="GO" id="GO:0050511">
    <property type="term" value="F:undecaprenyldiphospho-muramoylpentapeptide beta-N-acetylglucosaminyltransferase activity"/>
    <property type="evidence" value="ECO:0007669"/>
    <property type="project" value="UniProtKB-UniRule"/>
</dbReference>
<dbReference type="GO" id="GO:0005975">
    <property type="term" value="P:carbohydrate metabolic process"/>
    <property type="evidence" value="ECO:0007669"/>
    <property type="project" value="InterPro"/>
</dbReference>
<dbReference type="GO" id="GO:0051301">
    <property type="term" value="P:cell division"/>
    <property type="evidence" value="ECO:0007669"/>
    <property type="project" value="UniProtKB-KW"/>
</dbReference>
<dbReference type="GO" id="GO:0071555">
    <property type="term" value="P:cell wall organization"/>
    <property type="evidence" value="ECO:0007669"/>
    <property type="project" value="UniProtKB-KW"/>
</dbReference>
<dbReference type="GO" id="GO:0030259">
    <property type="term" value="P:lipid glycosylation"/>
    <property type="evidence" value="ECO:0007669"/>
    <property type="project" value="UniProtKB-UniRule"/>
</dbReference>
<dbReference type="GO" id="GO:0009252">
    <property type="term" value="P:peptidoglycan biosynthetic process"/>
    <property type="evidence" value="ECO:0007669"/>
    <property type="project" value="UniProtKB-UniRule"/>
</dbReference>
<dbReference type="GO" id="GO:0008360">
    <property type="term" value="P:regulation of cell shape"/>
    <property type="evidence" value="ECO:0007669"/>
    <property type="project" value="UniProtKB-KW"/>
</dbReference>
<dbReference type="CDD" id="cd03785">
    <property type="entry name" value="GT28_MurG"/>
    <property type="match status" value="1"/>
</dbReference>
<dbReference type="Gene3D" id="3.40.50.2000">
    <property type="entry name" value="Glycogen Phosphorylase B"/>
    <property type="match status" value="2"/>
</dbReference>
<dbReference type="HAMAP" id="MF_00033">
    <property type="entry name" value="MurG"/>
    <property type="match status" value="1"/>
</dbReference>
<dbReference type="InterPro" id="IPR006009">
    <property type="entry name" value="GlcNAc_MurG"/>
</dbReference>
<dbReference type="InterPro" id="IPR007235">
    <property type="entry name" value="Glyco_trans_28_C"/>
</dbReference>
<dbReference type="InterPro" id="IPR004276">
    <property type="entry name" value="GlycoTrans_28_N"/>
</dbReference>
<dbReference type="NCBIfam" id="TIGR01133">
    <property type="entry name" value="murG"/>
    <property type="match status" value="1"/>
</dbReference>
<dbReference type="PANTHER" id="PTHR21015:SF22">
    <property type="entry name" value="GLYCOSYLTRANSFERASE"/>
    <property type="match status" value="1"/>
</dbReference>
<dbReference type="PANTHER" id="PTHR21015">
    <property type="entry name" value="UDP-N-ACETYLGLUCOSAMINE--N-ACETYLMURAMYL-(PENTAPEPTIDE) PYROPHOSPHORYL-UNDECAPRENOL N-ACETYLGLUCOSAMINE TRANSFERASE 1"/>
    <property type="match status" value="1"/>
</dbReference>
<dbReference type="Pfam" id="PF04101">
    <property type="entry name" value="Glyco_tran_28_C"/>
    <property type="match status" value="1"/>
</dbReference>
<dbReference type="Pfam" id="PF03033">
    <property type="entry name" value="Glyco_transf_28"/>
    <property type="match status" value="1"/>
</dbReference>
<dbReference type="SUPFAM" id="SSF53756">
    <property type="entry name" value="UDP-Glycosyltransferase/glycogen phosphorylase"/>
    <property type="match status" value="1"/>
</dbReference>
<sequence length="375" mass="39167">MRQMAPLIMLAAGGTGGHLFPAEALGVALMKRGLRVRLVTDMRALRYSGLFSRDMVDVVPSETLRGRSPVALARTALKLGTGTLMALSLMLRLKPAAVIGFGGYPTLPPLLAARMFGIPTLVHDSNAVMGRANRFLSHKVTAIATSLPGVLDRDPALAAKTTTTGTPMRPAILAAAAVPFAAPEAEGPLRLLVVGGSQGARVMADVVPGAIEKLGPALWPRLVVVQQVRDEDMARVRAVYDRLKLNFELEPFFNDLPARLAASHLVISRSGAGTVAELAAIGRPSILVPLPGALDQDQFANAGVLSQAGGAIRIAQDDFTPTRLAQEISALAADPARLVAMAAAGRGAGRLDAAERLADLVVKVAGISSKTSQLQ</sequence>
<keyword id="KW-0131">Cell cycle</keyword>
<keyword id="KW-0132">Cell division</keyword>
<keyword id="KW-0997">Cell inner membrane</keyword>
<keyword id="KW-1003">Cell membrane</keyword>
<keyword id="KW-0133">Cell shape</keyword>
<keyword id="KW-0961">Cell wall biogenesis/degradation</keyword>
<keyword id="KW-0328">Glycosyltransferase</keyword>
<keyword id="KW-0472">Membrane</keyword>
<keyword id="KW-0573">Peptidoglycan synthesis</keyword>
<keyword id="KW-0808">Transferase</keyword>
<name>MURG_RHOPB</name>
<comment type="function">
    <text evidence="1">Cell wall formation. Catalyzes the transfer of a GlcNAc subunit on undecaprenyl-pyrophosphoryl-MurNAc-pentapeptide (lipid intermediate I) to form undecaprenyl-pyrophosphoryl-MurNAc-(pentapeptide)GlcNAc (lipid intermediate II).</text>
</comment>
<comment type="catalytic activity">
    <reaction evidence="1">
        <text>di-trans,octa-cis-undecaprenyl diphospho-N-acetyl-alpha-D-muramoyl-L-alanyl-D-glutamyl-meso-2,6-diaminopimeloyl-D-alanyl-D-alanine + UDP-N-acetyl-alpha-D-glucosamine = di-trans,octa-cis-undecaprenyl diphospho-[N-acetyl-alpha-D-glucosaminyl-(1-&gt;4)]-N-acetyl-alpha-D-muramoyl-L-alanyl-D-glutamyl-meso-2,6-diaminopimeloyl-D-alanyl-D-alanine + UDP + H(+)</text>
        <dbReference type="Rhea" id="RHEA:31227"/>
        <dbReference type="ChEBI" id="CHEBI:15378"/>
        <dbReference type="ChEBI" id="CHEBI:57705"/>
        <dbReference type="ChEBI" id="CHEBI:58223"/>
        <dbReference type="ChEBI" id="CHEBI:61387"/>
        <dbReference type="ChEBI" id="CHEBI:61388"/>
        <dbReference type="EC" id="2.4.1.227"/>
    </reaction>
</comment>
<comment type="pathway">
    <text evidence="1">Cell wall biogenesis; peptidoglycan biosynthesis.</text>
</comment>
<comment type="subcellular location">
    <subcellularLocation>
        <location evidence="1">Cell inner membrane</location>
        <topology evidence="1">Peripheral membrane protein</topology>
        <orientation evidence="1">Cytoplasmic side</orientation>
    </subcellularLocation>
</comment>
<comment type="similarity">
    <text evidence="1">Belongs to the glycosyltransferase 28 family. MurG subfamily.</text>
</comment>
<organism>
    <name type="scientific">Rhodopseudomonas palustris (strain BisB18)</name>
    <dbReference type="NCBI Taxonomy" id="316056"/>
    <lineage>
        <taxon>Bacteria</taxon>
        <taxon>Pseudomonadati</taxon>
        <taxon>Pseudomonadota</taxon>
        <taxon>Alphaproteobacteria</taxon>
        <taxon>Hyphomicrobiales</taxon>
        <taxon>Nitrobacteraceae</taxon>
        <taxon>Rhodopseudomonas</taxon>
    </lineage>
</organism>
<gene>
    <name evidence="1" type="primary">murG</name>
    <name type="ordered locus">RPC_3306</name>
</gene>
<proteinExistence type="inferred from homology"/>
<protein>
    <recommendedName>
        <fullName evidence="1">UDP-N-acetylglucosamine--N-acetylmuramyl-(pentapeptide) pyrophosphoryl-undecaprenol N-acetylglucosamine transferase</fullName>
        <ecNumber evidence="1">2.4.1.227</ecNumber>
    </recommendedName>
    <alternativeName>
        <fullName evidence="1">Undecaprenyl-PP-MurNAc-pentapeptide-UDPGlcNAc GlcNAc transferase</fullName>
    </alternativeName>
</protein>
<reference key="1">
    <citation type="submission" date="2006-03" db="EMBL/GenBank/DDBJ databases">
        <title>Complete sequence of Rhodopseudomonas palustris BisB18.</title>
        <authorList>
            <consortium name="US DOE Joint Genome Institute"/>
            <person name="Copeland A."/>
            <person name="Lucas S."/>
            <person name="Lapidus A."/>
            <person name="Barry K."/>
            <person name="Detter J.C."/>
            <person name="Glavina del Rio T."/>
            <person name="Hammon N."/>
            <person name="Israni S."/>
            <person name="Dalin E."/>
            <person name="Tice H."/>
            <person name="Pitluck S."/>
            <person name="Chain P."/>
            <person name="Malfatti S."/>
            <person name="Shin M."/>
            <person name="Vergez L."/>
            <person name="Schmutz J."/>
            <person name="Larimer F."/>
            <person name="Land M."/>
            <person name="Hauser L."/>
            <person name="Pelletier D.A."/>
            <person name="Kyrpides N."/>
            <person name="Anderson I."/>
            <person name="Oda Y."/>
            <person name="Harwood C.S."/>
            <person name="Richardson P."/>
        </authorList>
    </citation>
    <scope>NUCLEOTIDE SEQUENCE [LARGE SCALE GENOMIC DNA]</scope>
    <source>
        <strain>BisB18</strain>
    </source>
</reference>